<organism>
    <name type="scientific">Bacillus subtilis (strain 168)</name>
    <dbReference type="NCBI Taxonomy" id="224308"/>
    <lineage>
        <taxon>Bacteria</taxon>
        <taxon>Bacillati</taxon>
        <taxon>Bacillota</taxon>
        <taxon>Bacilli</taxon>
        <taxon>Bacillales</taxon>
        <taxon>Bacillaceae</taxon>
        <taxon>Bacillus</taxon>
    </lineage>
</organism>
<proteinExistence type="inferred from homology"/>
<comment type="function">
    <text evidence="1">Inhibits the expression or activity of extracellular murein hydrolases by interacting, possibly with LrgB, with the holin-like protein CidA. The LrgAB and CidA proteins may affect the proton motive force of the membrane. May be involved in programmed cell death (PCD), possibly triggering PCD in response to antibiotics and environmental stresses.</text>
</comment>
<comment type="subcellular location">
    <subcellularLocation>
        <location evidence="1">Cell membrane</location>
        <topology evidence="1">Multi-pass membrane protein</topology>
    </subcellularLocation>
</comment>
<comment type="similarity">
    <text evidence="1">Belongs to the CidA/LrgA family. LrgA subfamily.</text>
</comment>
<gene>
    <name evidence="1" type="primary">lrgA</name>
    <name type="synonym">ysbA</name>
    <name type="ordered locus">BSU28910</name>
</gene>
<sequence>MSAKKVYGFLTQAFIFAVIMLVSNMIAAIVPIPIPASVVGLVLLFLLLCLKVIKLEQVETLGTSLTSLIGFLFVPSGISVMNSLGVMQQYGLQIVLVILLATIILLGATGLFSQLILSLSGKRKTEADMKTKTVQSPQNNNELVHH</sequence>
<accession>P94515</accession>
<feature type="chain" id="PRO_0000213189" description="Antiholin-like protein LrgA">
    <location>
        <begin position="1"/>
        <end position="146"/>
    </location>
</feature>
<feature type="transmembrane region" description="Helical" evidence="1">
    <location>
        <begin position="7"/>
        <end position="29"/>
    </location>
</feature>
<feature type="transmembrane region" description="Helical" evidence="1">
    <location>
        <begin position="34"/>
        <end position="53"/>
    </location>
</feature>
<feature type="transmembrane region" description="Helical" evidence="1">
    <location>
        <begin position="65"/>
        <end position="87"/>
    </location>
</feature>
<feature type="transmembrane region" description="Helical" evidence="1">
    <location>
        <begin position="97"/>
        <end position="119"/>
    </location>
</feature>
<protein>
    <recommendedName>
        <fullName evidence="1">Antiholin-like protein LrgA</fullName>
    </recommendedName>
</protein>
<name>LRGA_BACSU</name>
<evidence type="ECO:0000255" key="1">
    <source>
        <dbReference type="HAMAP-Rule" id="MF_01141"/>
    </source>
</evidence>
<keyword id="KW-1003">Cell membrane</keyword>
<keyword id="KW-0204">Cytolysis</keyword>
<keyword id="KW-0472">Membrane</keyword>
<keyword id="KW-1185">Reference proteome</keyword>
<keyword id="KW-0812">Transmembrane</keyword>
<keyword id="KW-1133">Transmembrane helix</keyword>
<dbReference type="EMBL" id="Z75208">
    <property type="protein sequence ID" value="CAA99612.1"/>
    <property type="molecule type" value="Genomic_DNA"/>
</dbReference>
<dbReference type="EMBL" id="AL009126">
    <property type="protein sequence ID" value="CAB14851.1"/>
    <property type="molecule type" value="Genomic_DNA"/>
</dbReference>
<dbReference type="PIR" id="C69983">
    <property type="entry name" value="C69983"/>
</dbReference>
<dbReference type="RefSeq" id="WP_004399155.1">
    <property type="nucleotide sequence ID" value="NZ_OZ025638.1"/>
</dbReference>
<dbReference type="SMR" id="P94515"/>
<dbReference type="FunCoup" id="P94515">
    <property type="interactions" value="205"/>
</dbReference>
<dbReference type="STRING" id="224308.BSU28910"/>
<dbReference type="TCDB" id="1.E.14.1.17">
    <property type="family name" value="the cida/lrga holin (cida/lrga holin) family"/>
</dbReference>
<dbReference type="PaxDb" id="224308-BSU28910"/>
<dbReference type="EnsemblBacteria" id="CAB14851">
    <property type="protein sequence ID" value="CAB14851"/>
    <property type="gene ID" value="BSU_28910"/>
</dbReference>
<dbReference type="GeneID" id="937417"/>
<dbReference type="KEGG" id="bsu:BSU28910"/>
<dbReference type="PATRIC" id="fig|224308.179.peg.3139"/>
<dbReference type="eggNOG" id="COG1380">
    <property type="taxonomic scope" value="Bacteria"/>
</dbReference>
<dbReference type="InParanoid" id="P94515"/>
<dbReference type="OrthoDB" id="3176438at2"/>
<dbReference type="BioCyc" id="BSUB:BSU28910-MONOMER"/>
<dbReference type="Proteomes" id="UP000001570">
    <property type="component" value="Chromosome"/>
</dbReference>
<dbReference type="GO" id="GO:0005886">
    <property type="term" value="C:plasma membrane"/>
    <property type="evidence" value="ECO:0007669"/>
    <property type="project" value="UniProtKB-SubCell"/>
</dbReference>
<dbReference type="GO" id="GO:0019835">
    <property type="term" value="P:cytolysis"/>
    <property type="evidence" value="ECO:0007669"/>
    <property type="project" value="UniProtKB-UniRule"/>
</dbReference>
<dbReference type="GO" id="GO:0031640">
    <property type="term" value="P:killing of cells of another organism"/>
    <property type="evidence" value="ECO:0007669"/>
    <property type="project" value="UniProtKB-KW"/>
</dbReference>
<dbReference type="GO" id="GO:0012501">
    <property type="term" value="P:programmed cell death"/>
    <property type="evidence" value="ECO:0007669"/>
    <property type="project" value="UniProtKB-UniRule"/>
</dbReference>
<dbReference type="HAMAP" id="MF_01141">
    <property type="entry name" value="LrgA"/>
    <property type="match status" value="1"/>
</dbReference>
<dbReference type="InterPro" id="IPR023736">
    <property type="entry name" value="Antiholin-like_LrgA"/>
</dbReference>
<dbReference type="InterPro" id="IPR005538">
    <property type="entry name" value="LrgA/CidA"/>
</dbReference>
<dbReference type="NCBIfam" id="NF003155">
    <property type="entry name" value="PRK04125.1"/>
    <property type="match status" value="1"/>
</dbReference>
<dbReference type="PANTHER" id="PTHR33931:SF4">
    <property type="entry name" value="ANTIHOLIN-LIKE PROTEIN LRGA"/>
    <property type="match status" value="1"/>
</dbReference>
<dbReference type="PANTHER" id="PTHR33931">
    <property type="entry name" value="HOLIN-LIKE PROTEIN CIDA-RELATED"/>
    <property type="match status" value="1"/>
</dbReference>
<dbReference type="Pfam" id="PF03788">
    <property type="entry name" value="LrgA"/>
    <property type="match status" value="1"/>
</dbReference>
<reference key="1">
    <citation type="journal article" date="1996" name="Microbiology">
        <title>The dnaB-pheA (256 degrees-240 degrees) region of the Bacillus subtilis chromosome containing genes responsible for stress responses, the utilization of plant cell walls and primary metabolism.</title>
        <authorList>
            <person name="Wipat A."/>
            <person name="Carter N."/>
            <person name="Brignell C.S."/>
            <person name="Guy J.B."/>
            <person name="Piper K."/>
            <person name="Sanders J."/>
            <person name="Emmerson P.T."/>
            <person name="Harwood C.R."/>
        </authorList>
    </citation>
    <scope>NUCLEOTIDE SEQUENCE [GENOMIC DNA]</scope>
    <source>
        <strain>168</strain>
    </source>
</reference>
<reference key="2">
    <citation type="journal article" date="1997" name="Nature">
        <title>The complete genome sequence of the Gram-positive bacterium Bacillus subtilis.</title>
        <authorList>
            <person name="Kunst F."/>
            <person name="Ogasawara N."/>
            <person name="Moszer I."/>
            <person name="Albertini A.M."/>
            <person name="Alloni G."/>
            <person name="Azevedo V."/>
            <person name="Bertero M.G."/>
            <person name="Bessieres P."/>
            <person name="Bolotin A."/>
            <person name="Borchert S."/>
            <person name="Borriss R."/>
            <person name="Boursier L."/>
            <person name="Brans A."/>
            <person name="Braun M."/>
            <person name="Brignell S.C."/>
            <person name="Bron S."/>
            <person name="Brouillet S."/>
            <person name="Bruschi C.V."/>
            <person name="Caldwell B."/>
            <person name="Capuano V."/>
            <person name="Carter N.M."/>
            <person name="Choi S.-K."/>
            <person name="Codani J.-J."/>
            <person name="Connerton I.F."/>
            <person name="Cummings N.J."/>
            <person name="Daniel R.A."/>
            <person name="Denizot F."/>
            <person name="Devine K.M."/>
            <person name="Duesterhoeft A."/>
            <person name="Ehrlich S.D."/>
            <person name="Emmerson P.T."/>
            <person name="Entian K.-D."/>
            <person name="Errington J."/>
            <person name="Fabret C."/>
            <person name="Ferrari E."/>
            <person name="Foulger D."/>
            <person name="Fritz C."/>
            <person name="Fujita M."/>
            <person name="Fujita Y."/>
            <person name="Fuma S."/>
            <person name="Galizzi A."/>
            <person name="Galleron N."/>
            <person name="Ghim S.-Y."/>
            <person name="Glaser P."/>
            <person name="Goffeau A."/>
            <person name="Golightly E.J."/>
            <person name="Grandi G."/>
            <person name="Guiseppi G."/>
            <person name="Guy B.J."/>
            <person name="Haga K."/>
            <person name="Haiech J."/>
            <person name="Harwood C.R."/>
            <person name="Henaut A."/>
            <person name="Hilbert H."/>
            <person name="Holsappel S."/>
            <person name="Hosono S."/>
            <person name="Hullo M.-F."/>
            <person name="Itaya M."/>
            <person name="Jones L.-M."/>
            <person name="Joris B."/>
            <person name="Karamata D."/>
            <person name="Kasahara Y."/>
            <person name="Klaerr-Blanchard M."/>
            <person name="Klein C."/>
            <person name="Kobayashi Y."/>
            <person name="Koetter P."/>
            <person name="Koningstein G."/>
            <person name="Krogh S."/>
            <person name="Kumano M."/>
            <person name="Kurita K."/>
            <person name="Lapidus A."/>
            <person name="Lardinois S."/>
            <person name="Lauber J."/>
            <person name="Lazarevic V."/>
            <person name="Lee S.-M."/>
            <person name="Levine A."/>
            <person name="Liu H."/>
            <person name="Masuda S."/>
            <person name="Mauel C."/>
            <person name="Medigue C."/>
            <person name="Medina N."/>
            <person name="Mellado R.P."/>
            <person name="Mizuno M."/>
            <person name="Moestl D."/>
            <person name="Nakai S."/>
            <person name="Noback M."/>
            <person name="Noone D."/>
            <person name="O'Reilly M."/>
            <person name="Ogawa K."/>
            <person name="Ogiwara A."/>
            <person name="Oudega B."/>
            <person name="Park S.-H."/>
            <person name="Parro V."/>
            <person name="Pohl T.M."/>
            <person name="Portetelle D."/>
            <person name="Porwollik S."/>
            <person name="Prescott A.M."/>
            <person name="Presecan E."/>
            <person name="Pujic P."/>
            <person name="Purnelle B."/>
            <person name="Rapoport G."/>
            <person name="Rey M."/>
            <person name="Reynolds S."/>
            <person name="Rieger M."/>
            <person name="Rivolta C."/>
            <person name="Rocha E."/>
            <person name="Roche B."/>
            <person name="Rose M."/>
            <person name="Sadaie Y."/>
            <person name="Sato T."/>
            <person name="Scanlan E."/>
            <person name="Schleich S."/>
            <person name="Schroeter R."/>
            <person name="Scoffone F."/>
            <person name="Sekiguchi J."/>
            <person name="Sekowska A."/>
            <person name="Seror S.J."/>
            <person name="Serror P."/>
            <person name="Shin B.-S."/>
            <person name="Soldo B."/>
            <person name="Sorokin A."/>
            <person name="Tacconi E."/>
            <person name="Takagi T."/>
            <person name="Takahashi H."/>
            <person name="Takemaru K."/>
            <person name="Takeuchi M."/>
            <person name="Tamakoshi A."/>
            <person name="Tanaka T."/>
            <person name="Terpstra P."/>
            <person name="Tognoni A."/>
            <person name="Tosato V."/>
            <person name="Uchiyama S."/>
            <person name="Vandenbol M."/>
            <person name="Vannier F."/>
            <person name="Vassarotti A."/>
            <person name="Viari A."/>
            <person name="Wambutt R."/>
            <person name="Wedler E."/>
            <person name="Wedler H."/>
            <person name="Weitzenegger T."/>
            <person name="Winters P."/>
            <person name="Wipat A."/>
            <person name="Yamamoto H."/>
            <person name="Yamane K."/>
            <person name="Yasumoto K."/>
            <person name="Yata K."/>
            <person name="Yoshida K."/>
            <person name="Yoshikawa H.-F."/>
            <person name="Zumstein E."/>
            <person name="Yoshikawa H."/>
            <person name="Danchin A."/>
        </authorList>
    </citation>
    <scope>NUCLEOTIDE SEQUENCE [LARGE SCALE GENOMIC DNA]</scope>
    <source>
        <strain>168</strain>
    </source>
</reference>